<evidence type="ECO:0000250" key="1"/>
<evidence type="ECO:0000255" key="2"/>
<evidence type="ECO:0000305" key="3"/>
<evidence type="ECO:0007829" key="4">
    <source>
        <dbReference type="PDB" id="3MLR"/>
    </source>
</evidence>
<dbReference type="EMBL" id="K03346">
    <property type="protein sequence ID" value="AAB02407.1"/>
    <property type="molecule type" value="Genomic_DNA"/>
</dbReference>
<dbReference type="PDB" id="3MLR">
    <property type="method" value="X-ray"/>
    <property type="resolution" value="1.80 A"/>
    <property type="chains" value="P=296-315"/>
</dbReference>
<dbReference type="PDB" id="6DB5">
    <property type="method" value="X-ray"/>
    <property type="resolution" value="2.60 A"/>
    <property type="chains" value="P/Q=296-315"/>
</dbReference>
<dbReference type="PDBsum" id="3MLR"/>
<dbReference type="PDBsum" id="6DB5"/>
<dbReference type="SMR" id="P12490"/>
<dbReference type="GlyCosmos" id="P12490">
    <property type="glycosylation" value="24 sites, No reported glycans"/>
</dbReference>
<dbReference type="Reactome" id="R-HSA-5621480">
    <property type="pathway name" value="Dectin-2 family"/>
</dbReference>
<dbReference type="EvolutionaryTrace" id="P12490"/>
<dbReference type="GO" id="GO:0016020">
    <property type="term" value="C:membrane"/>
    <property type="evidence" value="ECO:0007669"/>
    <property type="project" value="UniProtKB-KW"/>
</dbReference>
<dbReference type="GO" id="GO:0019031">
    <property type="term" value="C:viral envelope"/>
    <property type="evidence" value="ECO:0007669"/>
    <property type="project" value="InterPro"/>
</dbReference>
<dbReference type="GO" id="GO:0055036">
    <property type="term" value="C:virion membrane"/>
    <property type="evidence" value="ECO:0007669"/>
    <property type="project" value="UniProtKB-SubCell"/>
</dbReference>
<dbReference type="GO" id="GO:0075512">
    <property type="term" value="P:clathrin-dependent endocytosis of virus by host cell"/>
    <property type="evidence" value="ECO:0007669"/>
    <property type="project" value="UniProtKB-KW"/>
</dbReference>
<dbReference type="GO" id="GO:0039654">
    <property type="term" value="P:fusion of virus membrane with host endosome membrane"/>
    <property type="evidence" value="ECO:0007669"/>
    <property type="project" value="UniProtKB-KW"/>
</dbReference>
<dbReference type="GO" id="GO:0019062">
    <property type="term" value="P:virion attachment to host cell"/>
    <property type="evidence" value="ECO:0007669"/>
    <property type="project" value="UniProtKB-KW"/>
</dbReference>
<dbReference type="FunFam" id="2.170.40.20:FF:000001">
    <property type="entry name" value="Envelope glycoprotein gp160"/>
    <property type="match status" value="1"/>
</dbReference>
<dbReference type="FunFam" id="2.170.40.20:FF:000007">
    <property type="entry name" value="Truncated surface protein"/>
    <property type="match status" value="1"/>
</dbReference>
<dbReference type="Gene3D" id="2.170.40.20">
    <property type="entry name" value="Human immunodeficiency virus 1, Gp160, envelope glycoprotein"/>
    <property type="match status" value="2"/>
</dbReference>
<dbReference type="InterPro" id="IPR036377">
    <property type="entry name" value="Gp120_core_sf"/>
</dbReference>
<dbReference type="InterPro" id="IPR000777">
    <property type="entry name" value="HIV1_Gp120"/>
</dbReference>
<dbReference type="Pfam" id="PF00516">
    <property type="entry name" value="GP120"/>
    <property type="match status" value="2"/>
</dbReference>
<dbReference type="SUPFAM" id="SSF56502">
    <property type="entry name" value="gp120 core"/>
    <property type="match status" value="2"/>
</dbReference>
<feature type="signal peptide" evidence="1">
    <location>
        <begin position="1"/>
        <end position="31"/>
    </location>
</feature>
<feature type="chain" id="PRO_0000038412" description="Truncated surface protein">
    <location>
        <begin position="32"/>
        <end position="421"/>
    </location>
</feature>
<feature type="region of interest" description="V1">
    <location>
        <begin position="130"/>
        <end position="151"/>
    </location>
</feature>
<feature type="region of interest" description="V2">
    <location>
        <begin position="152"/>
        <end position="191"/>
    </location>
</feature>
<feature type="region of interest" description="V3">
    <location>
        <begin position="291"/>
        <end position="324"/>
    </location>
</feature>
<feature type="region of interest" description="CD4-binding loop" evidence="1">
    <location>
        <begin position="357"/>
        <end position="367"/>
    </location>
</feature>
<feature type="region of interest" description="V4">
    <location>
        <begin position="378"/>
        <end position="410"/>
    </location>
</feature>
<feature type="glycosylation site" description="N-linked (GlcNAc...) asparagine; by host" evidence="2">
    <location>
        <position position="87"/>
    </location>
</feature>
<feature type="glycosylation site" description="N-linked (GlcNAc...) asparagine; by host" evidence="2">
    <location>
        <position position="97"/>
    </location>
</feature>
<feature type="glycosylation site" description="N-linked (GlcNAc...) asparagine; by host" evidence="2">
    <location>
        <position position="129"/>
    </location>
</feature>
<feature type="glycosylation site" description="N-linked (GlcNAc...) asparagine; by host" evidence="2">
    <location>
        <position position="135"/>
    </location>
</feature>
<feature type="glycosylation site" description="N-linked (GlcNAc...) asparagine; by host" evidence="2">
    <location>
        <position position="140"/>
    </location>
</feature>
<feature type="glycosylation site" description="N-linked (GlcNAc...) asparagine; by host" evidence="2">
    <location>
        <position position="151"/>
    </location>
</feature>
<feature type="glycosylation site" description="N-linked (GlcNAc...) asparagine; by host" evidence="2">
    <location>
        <position position="155"/>
    </location>
</feature>
<feature type="glycosylation site" description="N-linked (GlcNAc...) asparagine; by host" evidence="2">
    <location>
        <position position="183"/>
    </location>
</feature>
<feature type="glycosylation site" description="N-linked (GlcNAc...) asparagine; by host" evidence="2">
    <location>
        <position position="192"/>
    </location>
</feature>
<feature type="glycosylation site" description="N-linked (GlcNAc...) asparagine; by host" evidence="2">
    <location>
        <position position="229"/>
    </location>
</feature>
<feature type="glycosylation site" description="N-linked (GlcNAc...) asparagine; by host" evidence="2">
    <location>
        <position position="236"/>
    </location>
</feature>
<feature type="glycosylation site" description="N-linked (GlcNAc...) asparagine; by host" evidence="2">
    <location>
        <position position="257"/>
    </location>
</feature>
<feature type="glycosylation site" description="N-linked (GlcNAc...) asparagine; by host" evidence="2">
    <location>
        <position position="271"/>
    </location>
</feature>
<feature type="glycosylation site" description="N-linked (GlcNAc...) asparagine; by host" evidence="2">
    <location>
        <position position="284"/>
    </location>
</feature>
<feature type="glycosylation site" description="N-linked (GlcNAc...) asparagine; by host" evidence="2">
    <location>
        <position position="290"/>
    </location>
</feature>
<feature type="glycosylation site" description="N-linked (GlcNAc...) asparagine; by host" evidence="2">
    <location>
        <position position="296"/>
    </location>
</feature>
<feature type="glycosylation site" description="N-linked (GlcNAc...) asparagine; by host" evidence="2">
    <location>
        <position position="326"/>
    </location>
</feature>
<feature type="glycosylation site" description="N-linked (GlcNAc...) asparagine; by host" evidence="2">
    <location>
        <position position="333"/>
    </location>
</feature>
<feature type="glycosylation site" description="N-linked (GlcNAc...) asparagine; by host" evidence="2">
    <location>
        <position position="349"/>
    </location>
</feature>
<feature type="glycosylation site" description="N-linked (GlcNAc...) asparagine; by host" evidence="2">
    <location>
        <position position="355"/>
    </location>
</feature>
<feature type="glycosylation site" description="N-linked (GlcNAc...) asparagine; by host" evidence="2">
    <location>
        <position position="385"/>
    </location>
</feature>
<feature type="glycosylation site" description="N-linked (GlcNAc...) asparagine; by host" evidence="2">
    <location>
        <position position="391"/>
    </location>
</feature>
<feature type="glycosylation site" description="N-linked (GlcNAc...) asparagine; by host" evidence="2">
    <location>
        <position position="395"/>
    </location>
</feature>
<feature type="glycosylation site" description="N-linked (GlcNAc...) asparagine; by host" evidence="2">
    <location>
        <position position="403"/>
    </location>
</feature>
<feature type="disulfide bond" evidence="1">
    <location>
        <begin position="53"/>
        <end position="73"/>
    </location>
</feature>
<feature type="disulfide bond" evidence="1">
    <location>
        <begin position="118"/>
        <end position="200"/>
    </location>
</feature>
<feature type="disulfide bond" evidence="1">
    <location>
        <begin position="125"/>
        <end position="191"/>
    </location>
</feature>
<feature type="disulfide bond" evidence="1">
    <location>
        <begin position="130"/>
        <end position="152"/>
    </location>
</feature>
<feature type="disulfide bond" evidence="1">
    <location>
        <begin position="213"/>
        <end position="242"/>
    </location>
</feature>
<feature type="disulfide bond" evidence="1">
    <location>
        <begin position="223"/>
        <end position="234"/>
    </location>
</feature>
<feature type="disulfide bond" evidence="1">
    <location>
        <begin position="291"/>
        <end position="325"/>
    </location>
</feature>
<feature type="disulfide bond" evidence="1">
    <location>
        <begin position="378"/>
        <end position="410"/>
    </location>
</feature>
<feature type="strand" evidence="4">
    <location>
        <begin position="302"/>
        <end position="305"/>
    </location>
</feature>
<feature type="strand" evidence="4">
    <location>
        <begin position="308"/>
        <end position="310"/>
    </location>
</feature>
<reference key="1">
    <citation type="journal article" date="1986" name="Proc. Natl. Acad. Sci. U.S.A.">
        <title>Identification of conserved and divergent domains within the envelope gene of the acquired immunodeficiency syndrome retrovirus.</title>
        <authorList>
            <person name="Willey R.W."/>
            <person name="Rutledge R.A."/>
            <person name="Dias S."/>
            <person name="Folks T."/>
            <person name="Theodore T."/>
            <person name="Buckler C.E."/>
            <person name="Martin M.A."/>
        </authorList>
    </citation>
    <scope>NUCLEOTIDE SEQUENCE [GENOMIC DNA]</scope>
</reference>
<sequence length="421" mass="47493">MRAKGTRKNYQHLWRWGTMLLGMLMICSAAEQLWVTVYYGVPVWKEATTTLFCASDAKAYDTEVHNVWATHACVPTDPNPQEVVLQNVTENFNMWKNNTVEQMHEDIISLWDQSLKPCVKSTPLCVTLNCTDLTNATYANGSSEERGEIRNCSFNVTTIIRNKIQKEYALFYRLDIVPIDKDNTSYTLINCNTSVITQACPKVSFEPIPIHYCAPAGFAILKCNDKKFNGTGPCTNVSTVQCTHGIKPVVSTQLLLNGSLAEGEVVIRSENFTNNAKTIIVQLNKSVEINCTRPNNNTKKGIAIGPGRTLYAREKIIGDIRQAHCNISKAKWNDTLKQIVTKLKEQFRNKTIVFNQSSGGDPEIVMHSFNCGGEFFYCKTTQLFNSTWLFNSTWNDTERSDNNETIIIPCRIKQIINSGRK</sequence>
<organism>
    <name type="scientific">Human immunodeficiency virus type 1 group M subtype B (isolate NY5)</name>
    <name type="common">HIV-1</name>
    <dbReference type="NCBI Taxonomy" id="11698"/>
    <lineage>
        <taxon>Viruses</taxon>
        <taxon>Riboviria</taxon>
        <taxon>Pararnavirae</taxon>
        <taxon>Artverviricota</taxon>
        <taxon>Revtraviricetes</taxon>
        <taxon>Ortervirales</taxon>
        <taxon>Retroviridae</taxon>
        <taxon>Orthoretrovirinae</taxon>
        <taxon>Lentivirus</taxon>
        <taxon>Human immunodeficiency virus type 1</taxon>
    </lineage>
</organism>
<name>ENV_HV1N5</name>
<keyword id="KW-0002">3D-structure</keyword>
<keyword id="KW-0014">AIDS</keyword>
<keyword id="KW-1165">Clathrin-mediated endocytosis of virus by host</keyword>
<keyword id="KW-1015">Disulfide bond</keyword>
<keyword id="KW-1170">Fusion of virus membrane with host endosomal membrane</keyword>
<keyword id="KW-1168">Fusion of virus membrane with host membrane</keyword>
<keyword id="KW-0325">Glycoprotein</keyword>
<keyword id="KW-0945">Host-virus interaction</keyword>
<keyword id="KW-0472">Membrane</keyword>
<keyword id="KW-0732">Signal</keyword>
<keyword id="KW-1161">Viral attachment to host cell</keyword>
<keyword id="KW-1162">Viral penetration into host cytoplasm</keyword>
<keyword id="KW-0946">Virion</keyword>
<keyword id="KW-1164">Virus endocytosis by host</keyword>
<keyword id="KW-1160">Virus entry into host cell</keyword>
<gene>
    <name type="primary">env</name>
</gene>
<protein>
    <recommendedName>
        <fullName>Truncated surface protein</fullName>
        <shortName>SU</shortName>
    </recommendedName>
    <alternativeName>
        <fullName>Glycoprotein 120</fullName>
        <shortName>gp120</shortName>
    </alternativeName>
</protein>
<organismHost>
    <name type="scientific">Homo sapiens</name>
    <name type="common">Human</name>
    <dbReference type="NCBI Taxonomy" id="9606"/>
</organismHost>
<accession>P12490</accession>
<comment type="subcellular location">
    <subcellularLocation>
        <location evidence="3">Virion membrane</location>
    </subcellularLocation>
</comment>
<comment type="miscellaneous">
    <text>HIV-1 lineages are divided in three main groups, M (for Major), O (for Outlier), and N (for New, or Non-M, Non-O). The vast majority of strains found worldwide belong to the group M. Group O seems to be endemic to and largely confined to Cameroon and neighboring countries in West Central Africa, where these viruses represent a small minority of HIV-1 strains. The group N is represented by a limited number of isolates from Cameroonian persons. The group M is further subdivided in 9 clades or subtypes (A to D, F to H, J and K).</text>
</comment>
<proteinExistence type="evidence at protein level"/>